<evidence type="ECO:0000250" key="1">
    <source>
        <dbReference type="UniProtKB" id="W7LUF3"/>
    </source>
</evidence>
<evidence type="ECO:0000269" key="2">
    <source>
    </source>
</evidence>
<evidence type="ECO:0000269" key="3">
    <source>
    </source>
</evidence>
<evidence type="ECO:0000269" key="4">
    <source>
    </source>
</evidence>
<evidence type="ECO:0000269" key="5">
    <source ref="5"/>
</evidence>
<evidence type="ECO:0000303" key="6">
    <source ref="1"/>
</evidence>
<evidence type="ECO:0000305" key="7"/>
<evidence type="ECO:0000305" key="8">
    <source>
    </source>
</evidence>
<name>ALT3_ALTAL</name>
<protein>
    <recommendedName>
        <fullName evidence="1">Dehydrogenase ALT3</fullName>
        <ecNumber evidence="1">1.14.11.-</ecNumber>
    </recommendedName>
    <alternativeName>
        <fullName evidence="6">AAL-toxin biosynthesis cluster protein 3</fullName>
    </alternativeName>
</protein>
<gene>
    <name evidence="6" type="primary">ALT3</name>
</gene>
<proteinExistence type="inferred from homology"/>
<dbReference type="EC" id="1.14.11.-" evidence="1"/>
<dbReference type="EMBL" id="AB969680">
    <property type="protein sequence ID" value="BBG74269.1"/>
    <property type="molecule type" value="Genomic_DNA"/>
</dbReference>
<dbReference type="SMR" id="A0A3G9HPE6"/>
<dbReference type="VEuPathDB" id="FungiDB:CC77DRAFT_1029373"/>
<dbReference type="GO" id="GO:0005739">
    <property type="term" value="C:mitochondrion"/>
    <property type="evidence" value="ECO:0007669"/>
    <property type="project" value="TreeGrafter"/>
</dbReference>
<dbReference type="GO" id="GO:0004022">
    <property type="term" value="F:alcohol dehydrogenase (NAD+) activity"/>
    <property type="evidence" value="ECO:0007669"/>
    <property type="project" value="TreeGrafter"/>
</dbReference>
<dbReference type="GO" id="GO:0046872">
    <property type="term" value="F:metal ion binding"/>
    <property type="evidence" value="ECO:0007669"/>
    <property type="project" value="InterPro"/>
</dbReference>
<dbReference type="CDD" id="cd08192">
    <property type="entry name" value="MAR-like"/>
    <property type="match status" value="1"/>
</dbReference>
<dbReference type="Gene3D" id="3.40.50.1970">
    <property type="match status" value="1"/>
</dbReference>
<dbReference type="Gene3D" id="1.20.1090.10">
    <property type="entry name" value="Dehydroquinate synthase-like - alpha domain"/>
    <property type="match status" value="1"/>
</dbReference>
<dbReference type="InterPro" id="IPR001670">
    <property type="entry name" value="ADH_Fe/GldA"/>
</dbReference>
<dbReference type="InterPro" id="IPR056798">
    <property type="entry name" value="ADH_Fe_C"/>
</dbReference>
<dbReference type="InterPro" id="IPR039697">
    <property type="entry name" value="Alcohol_dehydrogenase_Fe"/>
</dbReference>
<dbReference type="PANTHER" id="PTHR11496">
    <property type="entry name" value="ALCOHOL DEHYDROGENASE"/>
    <property type="match status" value="1"/>
</dbReference>
<dbReference type="PANTHER" id="PTHR11496:SF107">
    <property type="entry name" value="ALCOHOL DEHYDROGENASE, PUTATIVE (AFU_ORTHOLOGUE AFUA_1G06800)-RELATED"/>
    <property type="match status" value="1"/>
</dbReference>
<dbReference type="Pfam" id="PF25137">
    <property type="entry name" value="ADH_Fe_C"/>
    <property type="match status" value="1"/>
</dbReference>
<dbReference type="Pfam" id="PF00465">
    <property type="entry name" value="Fe-ADH"/>
    <property type="match status" value="1"/>
</dbReference>
<dbReference type="SUPFAM" id="SSF56796">
    <property type="entry name" value="Dehydroquinate synthase-like"/>
    <property type="match status" value="1"/>
</dbReference>
<accession>A0A3G9HPE6</accession>
<comment type="function">
    <text evidence="2 3 4 5 8">Dehydrogenase; part of the gene cluster that mediates the biosynthesis of the host-selective toxins (HSTs) AAL-toxins, sphinganine-analog mycotoxins responsible for Alternaria stem canker on tomato by the tomato pathotype (PubMed:18435561, PubMed:19449880, PubMed:19749175). The biosynthesis starts with the polyketide synthase ALT1-catalyzed C-16 carbon chain assembly from one starter acetyl-CoA unit with malonyl-CoA extender units (PubMed:18435561, PubMed:19449880). ALT1 also selectively transfers methyl groups at the first and the third cycle of chain elongation for AAL toxin (PubMed:19449880). The C-16 polyketide chain is released from the enzyme by a nucleophilic attack of a carbanion, which is derived from R-carbon of glycin by decarboxylation, on the carbonyl carbon of polyketide acyl chain (Probable). This step is probably catalyzed by a pyridoxal 5'-phosphate-dependent aminoacyl transferase ALT4 (Probable). The respective functions of the other enzymes encoded by the cluster have still to be elucidated (Probable). The sphingosine N-acyltransferase-like protein ALT7 seems not to act as a resistance/self-tolerance factor against the toxin in the toxin biosynthetic gene cluster, contrary to what is expected (Ref.5).</text>
</comment>
<comment type="cofactor">
    <cofactor evidence="7">
        <name>Fe cation</name>
        <dbReference type="ChEBI" id="CHEBI:24875"/>
    </cofactor>
</comment>
<comment type="pathway">
    <text evidence="1">Mycotoxin biosynthesis.</text>
</comment>
<comment type="miscellaneous">
    <text evidence="4">Gene clusters encoding host-selective toxins (HSTs) are localized on conditionally dispensable chromosomes (CDCs), also called supernumerary chromosomes, where they are present in multiple copies. The CDCs are not essential for saprophytic growth but controls host-selective pathogenicity.</text>
</comment>
<comment type="similarity">
    <text evidence="7">Belongs to the iron-containing alcohol dehydrogenase family.</text>
</comment>
<organism>
    <name type="scientific">Alternaria alternata</name>
    <name type="common">Alternaria rot fungus</name>
    <name type="synonym">Torula alternata</name>
    <dbReference type="NCBI Taxonomy" id="5599"/>
    <lineage>
        <taxon>Eukaryota</taxon>
        <taxon>Fungi</taxon>
        <taxon>Dikarya</taxon>
        <taxon>Ascomycota</taxon>
        <taxon>Pezizomycotina</taxon>
        <taxon>Dothideomycetes</taxon>
        <taxon>Pleosporomycetidae</taxon>
        <taxon>Pleosporales</taxon>
        <taxon>Pleosporineae</taxon>
        <taxon>Pleosporaceae</taxon>
        <taxon>Alternaria</taxon>
        <taxon>Alternaria sect. Alternaria</taxon>
        <taxon>Alternaria alternata complex</taxon>
    </lineage>
</organism>
<sequence>MFGSLRTYIVSSKSISATPAFEALESALGTAKIAGIRCGITSHSPWEDVFQLAQDIQATDADLIITLGGCSITDAVKLAKLFIPNNVSTIPGAEELFARIRADESVKPATIPVINVPTTLSGSEFTCAGGATNLTTGHKQVTMHSSLYADVVVLDPRLSISTPRQVWLATGVRAIDHFVEGLYGNVAALFTDMREELGNEANEDIEKVIAGALGSLLTSLLSTKENWNDEEARLQAFLAVKECPRAGHNGIGASHGIGHQLGPLGVGHGETSCIILPWVLRYNWQHGDETARRRLGLAIDTFWGQEKVAETLGATGLSRKDADLYDVVGAYISALGLPRTLGQFDIKEEQLEGLAESAMKDWCTKVNPVTLTKDKVLDILRNAK</sequence>
<reference key="1">
    <citation type="submission" date="2014-06" db="EMBL/GenBank/DDBJ databases">
        <title>AAL-toxin biosynthetic genes cluster in the tomato pathotype of Alternaria alternata.</title>
        <authorList>
            <person name="Akagi Y."/>
            <person name="Akamatsu H."/>
            <person name="Takao K."/>
            <person name="Tsuge T."/>
            <person name="Kodama M."/>
        </authorList>
    </citation>
    <scope>NUCLEOTIDE SEQUENCE [GENOMIC DNA]</scope>
    <source>
        <strain>As-27</strain>
    </source>
</reference>
<reference key="2">
    <citation type="journal article" date="2008" name="J. Nat. Prod.">
        <title>Functional complementation of fumonisin biosynthesis in FUM1-disrupted fusarium verticillioides by the AAL-toxin polyketide synthase gene ALT1 from Alternaria alternata f. sp. Lycopersici.</title>
        <authorList>
            <person name="Zhu X."/>
            <person name="Vogeler C."/>
            <person name="Du L."/>
        </authorList>
    </citation>
    <scope>FUNCTION</scope>
</reference>
<reference key="3">
    <citation type="journal article" date="2009" name="Eukaryot. Cell">
        <title>Horizontal chromosome transfer, a mechanism for the evolution and differentiation of a plant-pathogenic fungus.</title>
        <authorList>
            <person name="Akagi Y."/>
            <person name="Akamatsu H."/>
            <person name="Otani H."/>
            <person name="Kodama M."/>
        </authorList>
    </citation>
    <scope>FUNCTION</scope>
</reference>
<reference key="4">
    <citation type="journal article" date="2009" name="J. Nat. Prod.">
        <title>Introduction of the AAL-toxin polyketide synthase gene ALT1 into FUM1-disrupted Fusarium verticillioides produces metabolites with the fumonisin methylation pattern.</title>
        <authorList>
            <person name="Li Y."/>
            <person name="Shen Y."/>
            <person name="Zhu X."/>
            <person name="Du L."/>
        </authorList>
    </citation>
    <scope>FUNCTION</scope>
</reference>
<reference key="5">
    <citation type="journal article" date="2012" name="J. Plant Pathol. Microbiol.">
        <title>Functional analysis of the ceramide synthase gene ALT7, a homolog of the disease resistance gene Asc1, in the plant pathogen Alternaria alternata.</title>
        <authorList>
            <person name="Kheder A.A."/>
            <person name="Akagi Y."/>
            <person name="Tsuge T."/>
            <person name="Kodama M."/>
        </authorList>
    </citation>
    <scope>FUNCTION</scope>
</reference>
<feature type="chain" id="PRO_0000449852" description="Dehydrogenase ALT3">
    <location>
        <begin position="1"/>
        <end position="384"/>
    </location>
</feature>
<keyword id="KW-0408">Iron</keyword>
<keyword id="KW-0520">NAD</keyword>
<keyword id="KW-0560">Oxidoreductase</keyword>